<proteinExistence type="evidence at transcript level"/>
<comment type="function">
    <text evidence="1">Catalyzes the ATP-dependent amination of UTP to CTP with either L-glutamine or ammonia as the source of nitrogen. Constitutes the rate-limiting enzyme in the synthesis of cytosine nucleotides (By similarity).</text>
</comment>
<comment type="catalytic activity">
    <reaction>
        <text>UTP + L-glutamine + ATP + H2O = CTP + L-glutamate + ADP + phosphate + 2 H(+)</text>
        <dbReference type="Rhea" id="RHEA:26426"/>
        <dbReference type="ChEBI" id="CHEBI:15377"/>
        <dbReference type="ChEBI" id="CHEBI:15378"/>
        <dbReference type="ChEBI" id="CHEBI:29985"/>
        <dbReference type="ChEBI" id="CHEBI:30616"/>
        <dbReference type="ChEBI" id="CHEBI:37563"/>
        <dbReference type="ChEBI" id="CHEBI:43474"/>
        <dbReference type="ChEBI" id="CHEBI:46398"/>
        <dbReference type="ChEBI" id="CHEBI:58359"/>
        <dbReference type="ChEBI" id="CHEBI:456216"/>
        <dbReference type="EC" id="6.3.4.2"/>
    </reaction>
</comment>
<comment type="pathway">
    <text>Pyrimidine metabolism; CTP biosynthesis via de novo pathway; CTP from UDP: step 2/2.</text>
</comment>
<comment type="similarity">
    <text evidence="5">Belongs to the CTP synthase family.</text>
</comment>
<keyword id="KW-0067">ATP-binding</keyword>
<keyword id="KW-0315">Glutamine amidotransferase</keyword>
<keyword id="KW-0436">Ligase</keyword>
<keyword id="KW-0547">Nucleotide-binding</keyword>
<keyword id="KW-0597">Phosphoprotein</keyword>
<keyword id="KW-0665">Pyrimidine biosynthesis</keyword>
<keyword id="KW-1185">Reference proteome</keyword>
<evidence type="ECO:0000250" key="1"/>
<evidence type="ECO:0000250" key="2">
    <source>
        <dbReference type="UniProtKB" id="Q9NRF8"/>
    </source>
</evidence>
<evidence type="ECO:0000255" key="3">
    <source>
        <dbReference type="PROSITE-ProRule" id="PRU00605"/>
    </source>
</evidence>
<evidence type="ECO:0000256" key="4">
    <source>
        <dbReference type="SAM" id="MobiDB-lite"/>
    </source>
</evidence>
<evidence type="ECO:0000305" key="5"/>
<organism>
    <name type="scientific">Bos taurus</name>
    <name type="common">Bovine</name>
    <dbReference type="NCBI Taxonomy" id="9913"/>
    <lineage>
        <taxon>Eukaryota</taxon>
        <taxon>Metazoa</taxon>
        <taxon>Chordata</taxon>
        <taxon>Craniata</taxon>
        <taxon>Vertebrata</taxon>
        <taxon>Euteleostomi</taxon>
        <taxon>Mammalia</taxon>
        <taxon>Eutheria</taxon>
        <taxon>Laurasiatheria</taxon>
        <taxon>Artiodactyla</taxon>
        <taxon>Ruminantia</taxon>
        <taxon>Pecora</taxon>
        <taxon>Bovidae</taxon>
        <taxon>Bovinae</taxon>
        <taxon>Bos</taxon>
    </lineage>
</organism>
<sequence length="586" mass="65481">MKYILVTGGVISGIGKGIIASSIGTILKSCGLRVTAIKIDPYINIDAGTFSPYEHGEVFVLNDGGEVDLDLGNYERFLDINLYKDNNITTGKIYQHVINKERRGDYLGKTVQVVPHITDAVQEWVMNQAMVPVDGHKEEPQICVIELGGTIGDIEGMPFVEAFRQFQFKAKRENFCNIHVSLVPQPSATGEQKTKPTQNSVRALRGLGLSPDLIVCRSSTPIEMAVKEKISMFCHVNPEQVICIHDVSSTYRVPVLLEEQGIIKYFKERLDLPIGDSASSLLSKWRNMADRYERLQKTCSIALVGKYTKLRDCYASVFKALEHSALAINHKLNLMYIDSIDLEQTTEVEDPVKFHEAWQKLCKADGVLVPGGFGIRGTLGKLQAISWARSRKIPFLGVCLGMQLAVIEFARNCLNLKDADSTEFEPNARVPVVIDMPEHNPGNLGGTMRLGIRRTVFKTENSILRKLYGDVPFIEERHRHRYEVNPSLISQLEQKDLSFVGQDVDGERMEIIELANHPYFVGVQFHPEFSSRPMKPSPPYLGLLLAATGNLNAYLLQGCKLSSSDRYSDASDDSFSEPRLAELEIS</sequence>
<gene>
    <name type="primary">CTPS2</name>
</gene>
<name>PYRG2_BOVIN</name>
<dbReference type="EC" id="6.3.4.2"/>
<dbReference type="EMBL" id="BT030529">
    <property type="protein sequence ID" value="ABQ12969.1"/>
    <property type="molecule type" value="mRNA"/>
</dbReference>
<dbReference type="EMBL" id="BC114742">
    <property type="protein sequence ID" value="AAI14743.1"/>
    <property type="molecule type" value="mRNA"/>
</dbReference>
<dbReference type="RefSeq" id="NP_001070434.1">
    <property type="nucleotide sequence ID" value="NM_001076966.1"/>
</dbReference>
<dbReference type="RefSeq" id="XP_005228512.1">
    <property type="nucleotide sequence ID" value="XM_005228455.2"/>
</dbReference>
<dbReference type="RefSeq" id="XP_005228513.1">
    <property type="nucleotide sequence ID" value="XM_005228456.4"/>
</dbReference>
<dbReference type="RefSeq" id="XP_024844042.1">
    <property type="nucleotide sequence ID" value="XM_024988274.2"/>
</dbReference>
<dbReference type="SMR" id="Q1RMS2"/>
<dbReference type="FunCoup" id="Q1RMS2">
    <property type="interactions" value="2423"/>
</dbReference>
<dbReference type="STRING" id="9913.ENSBTAP00000061098"/>
<dbReference type="MEROPS" id="C26.964"/>
<dbReference type="PaxDb" id="9913-ENSBTAP00000022629"/>
<dbReference type="GeneID" id="767849"/>
<dbReference type="KEGG" id="bta:767849"/>
<dbReference type="CTD" id="56474"/>
<dbReference type="VEuPathDB" id="HostDB:ENSBTAG00000017017"/>
<dbReference type="eggNOG" id="KOG2387">
    <property type="taxonomic scope" value="Eukaryota"/>
</dbReference>
<dbReference type="HOGENOM" id="CLU_011675_4_1_1"/>
<dbReference type="InParanoid" id="Q1RMS2"/>
<dbReference type="OMA" id="HAAMYCH"/>
<dbReference type="OrthoDB" id="1739076at2759"/>
<dbReference type="TreeFam" id="TF300379"/>
<dbReference type="Reactome" id="R-BTA-499943">
    <property type="pathway name" value="Interconversion of nucleotide di- and triphosphates"/>
</dbReference>
<dbReference type="UniPathway" id="UPA00159">
    <property type="reaction ID" value="UER00277"/>
</dbReference>
<dbReference type="Proteomes" id="UP000009136">
    <property type="component" value="Chromosome X"/>
</dbReference>
<dbReference type="Bgee" id="ENSBTAG00000017017">
    <property type="expression patterns" value="Expressed in caput epididymis and 108 other cell types or tissues"/>
</dbReference>
<dbReference type="GO" id="GO:0097268">
    <property type="term" value="C:cytoophidium"/>
    <property type="evidence" value="ECO:0000318"/>
    <property type="project" value="GO_Central"/>
</dbReference>
<dbReference type="GO" id="GO:0005737">
    <property type="term" value="C:cytoplasm"/>
    <property type="evidence" value="ECO:0000318"/>
    <property type="project" value="GO_Central"/>
</dbReference>
<dbReference type="GO" id="GO:0005524">
    <property type="term" value="F:ATP binding"/>
    <property type="evidence" value="ECO:0007669"/>
    <property type="project" value="UniProtKB-KW"/>
</dbReference>
<dbReference type="GO" id="GO:0003883">
    <property type="term" value="F:CTP synthase activity"/>
    <property type="evidence" value="ECO:0000318"/>
    <property type="project" value="GO_Central"/>
</dbReference>
<dbReference type="GO" id="GO:0042802">
    <property type="term" value="F:identical protein binding"/>
    <property type="evidence" value="ECO:0000318"/>
    <property type="project" value="GO_Central"/>
</dbReference>
<dbReference type="GO" id="GO:0044210">
    <property type="term" value="P:'de novo' CTP biosynthetic process"/>
    <property type="evidence" value="ECO:0007669"/>
    <property type="project" value="UniProtKB-UniPathway"/>
</dbReference>
<dbReference type="GO" id="GO:0006241">
    <property type="term" value="P:CTP biosynthetic process"/>
    <property type="evidence" value="ECO:0000318"/>
    <property type="project" value="GO_Central"/>
</dbReference>
<dbReference type="GO" id="GO:0019856">
    <property type="term" value="P:pyrimidine nucleobase biosynthetic process"/>
    <property type="evidence" value="ECO:0000318"/>
    <property type="project" value="GO_Central"/>
</dbReference>
<dbReference type="CDD" id="cd03113">
    <property type="entry name" value="CTPS_N"/>
    <property type="match status" value="1"/>
</dbReference>
<dbReference type="CDD" id="cd01746">
    <property type="entry name" value="GATase1_CTP_Synthase"/>
    <property type="match status" value="1"/>
</dbReference>
<dbReference type="FunFam" id="3.40.50.300:FF:000207">
    <property type="entry name" value="CTP synthase"/>
    <property type="match status" value="1"/>
</dbReference>
<dbReference type="FunFam" id="3.40.50.880:FF:000005">
    <property type="entry name" value="CTP synthase"/>
    <property type="match status" value="1"/>
</dbReference>
<dbReference type="Gene3D" id="3.40.50.880">
    <property type="match status" value="1"/>
</dbReference>
<dbReference type="Gene3D" id="3.40.50.300">
    <property type="entry name" value="P-loop containing nucleotide triphosphate hydrolases"/>
    <property type="match status" value="1"/>
</dbReference>
<dbReference type="InterPro" id="IPR029062">
    <property type="entry name" value="Class_I_gatase-like"/>
</dbReference>
<dbReference type="InterPro" id="IPR004468">
    <property type="entry name" value="CTP_synthase"/>
</dbReference>
<dbReference type="InterPro" id="IPR017456">
    <property type="entry name" value="CTP_synthase_N"/>
</dbReference>
<dbReference type="InterPro" id="IPR017926">
    <property type="entry name" value="GATASE"/>
</dbReference>
<dbReference type="InterPro" id="IPR033828">
    <property type="entry name" value="GATase1_CTP_Synthase"/>
</dbReference>
<dbReference type="InterPro" id="IPR027417">
    <property type="entry name" value="P-loop_NTPase"/>
</dbReference>
<dbReference type="NCBIfam" id="NF003792">
    <property type="entry name" value="PRK05380.1"/>
    <property type="match status" value="1"/>
</dbReference>
<dbReference type="NCBIfam" id="TIGR00337">
    <property type="entry name" value="PyrG"/>
    <property type="match status" value="1"/>
</dbReference>
<dbReference type="PANTHER" id="PTHR11550">
    <property type="entry name" value="CTP SYNTHASE"/>
    <property type="match status" value="1"/>
</dbReference>
<dbReference type="PANTHER" id="PTHR11550:SF2">
    <property type="entry name" value="CTP SYNTHASE 2"/>
    <property type="match status" value="1"/>
</dbReference>
<dbReference type="Pfam" id="PF06418">
    <property type="entry name" value="CTP_synth_N"/>
    <property type="match status" value="1"/>
</dbReference>
<dbReference type="Pfam" id="PF00117">
    <property type="entry name" value="GATase"/>
    <property type="match status" value="1"/>
</dbReference>
<dbReference type="SUPFAM" id="SSF52317">
    <property type="entry name" value="Class I glutamine amidotransferase-like"/>
    <property type="match status" value="1"/>
</dbReference>
<dbReference type="SUPFAM" id="SSF52540">
    <property type="entry name" value="P-loop containing nucleoside triphosphate hydrolases"/>
    <property type="match status" value="1"/>
</dbReference>
<dbReference type="PROSITE" id="PS51273">
    <property type="entry name" value="GATASE_TYPE_1"/>
    <property type="match status" value="1"/>
</dbReference>
<protein>
    <recommendedName>
        <fullName>CTP synthase 2</fullName>
        <ecNumber>6.3.4.2</ecNumber>
    </recommendedName>
    <alternativeName>
        <fullName>CTP synthetase 2</fullName>
    </alternativeName>
    <alternativeName>
        <fullName>UTP--ammonia ligase 2</fullName>
    </alternativeName>
</protein>
<reference key="1">
    <citation type="journal article" date="2005" name="BMC Genomics">
        <title>Characterization of 954 bovine full-CDS cDNA sequences.</title>
        <authorList>
            <person name="Harhay G.P."/>
            <person name="Sonstegard T.S."/>
            <person name="Keele J.W."/>
            <person name="Heaton M.P."/>
            <person name="Clawson M.L."/>
            <person name="Snelling W.M."/>
            <person name="Wiedmann R.T."/>
            <person name="Van Tassell C.P."/>
            <person name="Smith T.P.L."/>
        </authorList>
    </citation>
    <scope>NUCLEOTIDE SEQUENCE [LARGE SCALE MRNA]</scope>
</reference>
<reference key="2">
    <citation type="submission" date="2006-04" db="EMBL/GenBank/DDBJ databases">
        <authorList>
            <consortium name="NIH - Mammalian Gene Collection (MGC) project"/>
        </authorList>
    </citation>
    <scope>NUCLEOTIDE SEQUENCE [LARGE SCALE MRNA]</scope>
    <source>
        <strain>Hereford</strain>
        <tissue>Uterus</tissue>
    </source>
</reference>
<accession>Q1RMS2</accession>
<accession>A5D9B0</accession>
<feature type="chain" id="PRO_0000247032" description="CTP synthase 2">
    <location>
        <begin position="1"/>
        <end position="586"/>
    </location>
</feature>
<feature type="domain" description="Glutamine amidotransferase type-1" evidence="3">
    <location>
        <begin position="300"/>
        <end position="554"/>
    </location>
</feature>
<feature type="region of interest" description="Disordered" evidence="4">
    <location>
        <begin position="564"/>
        <end position="586"/>
    </location>
</feature>
<feature type="active site" description="For GATase activity" evidence="3">
    <location>
        <position position="399"/>
    </location>
</feature>
<feature type="active site" description="For GATase activity" evidence="3">
    <location>
        <position position="526"/>
    </location>
</feature>
<feature type="active site" description="For GATase activity" evidence="3">
    <location>
        <position position="528"/>
    </location>
</feature>
<feature type="modified residue" description="Phosphoserine" evidence="2">
    <location>
        <position position="568"/>
    </location>
</feature>
<feature type="modified residue" description="Phosphoserine" evidence="2">
    <location>
        <position position="571"/>
    </location>
</feature>
<feature type="modified residue" description="Phosphoserine" evidence="2">
    <location>
        <position position="574"/>
    </location>
</feature>